<protein>
    <recommendedName>
        <fullName evidence="1">NADH-quinone oxidoreductase subunit N</fullName>
        <ecNumber evidence="1">7.1.1.-</ecNumber>
    </recommendedName>
    <alternativeName>
        <fullName evidence="1">NADH dehydrogenase I subunit N</fullName>
    </alternativeName>
    <alternativeName>
        <fullName evidence="1">NDH-1 subunit N</fullName>
    </alternativeName>
</protein>
<sequence length="475" mass="49770">MDILNDISIAAPEALLIGVALIGVLLGATFKQSFNGLSRLLGALALAGAAFLAASQSAVDASTAFNGLYKVTPFIAIAKAVSYGVGAIALLVAGGYLHRENMNKFEYTLLVMFGSAGMGVMLSANNLMTLYMGIETLSLSSYVLAAFNRDSRRSAEAGLKYFVLGALASGLLLFGCSLVYGYTGFASFEQIAAADQSIGLTFGLVLILMALSFKASAAPFHVWTPDVYEGAPTPVVTFFSTAPKLATVAVLANIMFTVFGVYEESWMLIIAIVSAISMLVGAFGGLAQNNIKRLLAYSSIANVGYALMGVAAGEVNGAASVLTYMTIYVITTLGMFGIVLAMRRRDGQVEEISDLNGLSTSRPGLAVAMTVLVFSVAGIPPMAGFLGKWVVFEAALKSELYWLVAVGVIGSVVSLGYYLRLIWAMWAKTSDEEALEPADGMVSVSIYGATILAFPVLVIWIGWMTGIIGTAAAAG</sequence>
<feature type="chain" id="PRO_0000391165" description="NADH-quinone oxidoreductase subunit N">
    <location>
        <begin position="1"/>
        <end position="475"/>
    </location>
</feature>
<feature type="transmembrane region" description="Helical" evidence="1">
    <location>
        <begin position="7"/>
        <end position="27"/>
    </location>
</feature>
<feature type="transmembrane region" description="Helical" evidence="1">
    <location>
        <begin position="40"/>
        <end position="60"/>
    </location>
</feature>
<feature type="transmembrane region" description="Helical" evidence="1">
    <location>
        <begin position="74"/>
        <end position="94"/>
    </location>
</feature>
<feature type="transmembrane region" description="Helical" evidence="1">
    <location>
        <begin position="105"/>
        <end position="125"/>
    </location>
</feature>
<feature type="transmembrane region" description="Helical" evidence="1">
    <location>
        <begin position="127"/>
        <end position="147"/>
    </location>
</feature>
<feature type="transmembrane region" description="Helical" evidence="1">
    <location>
        <begin position="161"/>
        <end position="181"/>
    </location>
</feature>
<feature type="transmembrane region" description="Helical" evidence="1">
    <location>
        <begin position="191"/>
        <end position="211"/>
    </location>
</feature>
<feature type="transmembrane region" description="Helical" evidence="1">
    <location>
        <begin position="242"/>
        <end position="262"/>
    </location>
</feature>
<feature type="transmembrane region" description="Helical" evidence="1">
    <location>
        <begin position="266"/>
        <end position="286"/>
    </location>
</feature>
<feature type="transmembrane region" description="Helical" evidence="1">
    <location>
        <begin position="295"/>
        <end position="315"/>
    </location>
</feature>
<feature type="transmembrane region" description="Helical" evidence="1">
    <location>
        <begin position="321"/>
        <end position="341"/>
    </location>
</feature>
<feature type="transmembrane region" description="Helical" evidence="1">
    <location>
        <begin position="365"/>
        <end position="385"/>
    </location>
</feature>
<feature type="transmembrane region" description="Helical" evidence="1">
    <location>
        <begin position="399"/>
        <end position="419"/>
    </location>
</feature>
<feature type="transmembrane region" description="Helical" evidence="1">
    <location>
        <begin position="448"/>
        <end position="468"/>
    </location>
</feature>
<proteinExistence type="inferred from homology"/>
<keyword id="KW-0997">Cell inner membrane</keyword>
<keyword id="KW-1003">Cell membrane</keyword>
<keyword id="KW-0472">Membrane</keyword>
<keyword id="KW-0520">NAD</keyword>
<keyword id="KW-0874">Quinone</keyword>
<keyword id="KW-1185">Reference proteome</keyword>
<keyword id="KW-1278">Translocase</keyword>
<keyword id="KW-0812">Transmembrane</keyword>
<keyword id="KW-1133">Transmembrane helix</keyword>
<keyword id="KW-0813">Transport</keyword>
<keyword id="KW-0830">Ubiquinone</keyword>
<comment type="function">
    <text evidence="1">NDH-1 shuttles electrons from NADH, via FMN and iron-sulfur (Fe-S) centers, to quinones in the respiratory chain. The immediate electron acceptor for the enzyme in this species is believed to be ubiquinone. Couples the redox reaction to proton translocation (for every two electrons transferred, four hydrogen ions are translocated across the cytoplasmic membrane), and thus conserves the redox energy in a proton gradient.</text>
</comment>
<comment type="catalytic activity">
    <reaction evidence="1">
        <text>a quinone + NADH + 5 H(+)(in) = a quinol + NAD(+) + 4 H(+)(out)</text>
        <dbReference type="Rhea" id="RHEA:57888"/>
        <dbReference type="ChEBI" id="CHEBI:15378"/>
        <dbReference type="ChEBI" id="CHEBI:24646"/>
        <dbReference type="ChEBI" id="CHEBI:57540"/>
        <dbReference type="ChEBI" id="CHEBI:57945"/>
        <dbReference type="ChEBI" id="CHEBI:132124"/>
    </reaction>
</comment>
<comment type="subunit">
    <text evidence="1">NDH-1 is composed of 14 different subunits. Subunits NuoA, H, J, K, L, M, N constitute the membrane sector of the complex.</text>
</comment>
<comment type="subcellular location">
    <subcellularLocation>
        <location evidence="1">Cell inner membrane</location>
        <topology evidence="1">Multi-pass membrane protein</topology>
    </subcellularLocation>
</comment>
<comment type="similarity">
    <text evidence="1">Belongs to the complex I subunit 2 family.</text>
</comment>
<accession>C6XJX0</accession>
<organism>
    <name type="scientific">Hirschia baltica (strain ATCC 49814 / DSM 5838 / IFAM 1418)</name>
    <dbReference type="NCBI Taxonomy" id="582402"/>
    <lineage>
        <taxon>Bacteria</taxon>
        <taxon>Pseudomonadati</taxon>
        <taxon>Pseudomonadota</taxon>
        <taxon>Alphaproteobacteria</taxon>
        <taxon>Hyphomonadales</taxon>
        <taxon>Hyphomonadaceae</taxon>
        <taxon>Hirschia</taxon>
    </lineage>
</organism>
<name>NUON_HIRBI</name>
<dbReference type="EC" id="7.1.1.-" evidence="1"/>
<dbReference type="EMBL" id="CP001678">
    <property type="protein sequence ID" value="ACT59415.1"/>
    <property type="molecule type" value="Genomic_DNA"/>
</dbReference>
<dbReference type="RefSeq" id="WP_015827565.1">
    <property type="nucleotide sequence ID" value="NC_012982.1"/>
</dbReference>
<dbReference type="SMR" id="C6XJX0"/>
<dbReference type="STRING" id="582402.Hbal_1727"/>
<dbReference type="KEGG" id="hba:Hbal_1727"/>
<dbReference type="eggNOG" id="COG1007">
    <property type="taxonomic scope" value="Bacteria"/>
</dbReference>
<dbReference type="HOGENOM" id="CLU_007100_1_3_5"/>
<dbReference type="OrthoDB" id="9811718at2"/>
<dbReference type="Proteomes" id="UP000002745">
    <property type="component" value="Chromosome"/>
</dbReference>
<dbReference type="GO" id="GO:0005886">
    <property type="term" value="C:plasma membrane"/>
    <property type="evidence" value="ECO:0007669"/>
    <property type="project" value="UniProtKB-SubCell"/>
</dbReference>
<dbReference type="GO" id="GO:0008137">
    <property type="term" value="F:NADH dehydrogenase (ubiquinone) activity"/>
    <property type="evidence" value="ECO:0007669"/>
    <property type="project" value="InterPro"/>
</dbReference>
<dbReference type="GO" id="GO:0050136">
    <property type="term" value="F:NADH:ubiquinone reductase (non-electrogenic) activity"/>
    <property type="evidence" value="ECO:0007669"/>
    <property type="project" value="UniProtKB-UniRule"/>
</dbReference>
<dbReference type="GO" id="GO:0048038">
    <property type="term" value="F:quinone binding"/>
    <property type="evidence" value="ECO:0007669"/>
    <property type="project" value="UniProtKB-KW"/>
</dbReference>
<dbReference type="GO" id="GO:0042773">
    <property type="term" value="P:ATP synthesis coupled electron transport"/>
    <property type="evidence" value="ECO:0007669"/>
    <property type="project" value="InterPro"/>
</dbReference>
<dbReference type="HAMAP" id="MF_00445">
    <property type="entry name" value="NDH1_NuoN_1"/>
    <property type="match status" value="1"/>
</dbReference>
<dbReference type="InterPro" id="IPR010096">
    <property type="entry name" value="NADH-Q_OxRdtase_suN/2"/>
</dbReference>
<dbReference type="InterPro" id="IPR001750">
    <property type="entry name" value="ND/Mrp_TM"/>
</dbReference>
<dbReference type="NCBIfam" id="TIGR01770">
    <property type="entry name" value="NDH_I_N"/>
    <property type="match status" value="1"/>
</dbReference>
<dbReference type="PANTHER" id="PTHR22773">
    <property type="entry name" value="NADH DEHYDROGENASE"/>
    <property type="match status" value="1"/>
</dbReference>
<dbReference type="Pfam" id="PF00361">
    <property type="entry name" value="Proton_antipo_M"/>
    <property type="match status" value="1"/>
</dbReference>
<gene>
    <name evidence="1" type="primary">nuoN</name>
    <name type="ordered locus">Hbal_1727</name>
</gene>
<evidence type="ECO:0000255" key="1">
    <source>
        <dbReference type="HAMAP-Rule" id="MF_00445"/>
    </source>
</evidence>
<reference key="1">
    <citation type="journal article" date="2011" name="J. Bacteriol.">
        <title>Genome sequences of eight morphologically diverse alphaproteobacteria.</title>
        <authorList>
            <consortium name="US DOE Joint Genome Institute"/>
            <person name="Brown P.J."/>
            <person name="Kysela D.T."/>
            <person name="Buechlein A."/>
            <person name="Hemmerich C."/>
            <person name="Brun Y.V."/>
        </authorList>
    </citation>
    <scope>NUCLEOTIDE SEQUENCE [LARGE SCALE GENOMIC DNA]</scope>
    <source>
        <strain>ATCC 49814 / DSM 5838 / IFAM 1418</strain>
    </source>
</reference>